<accession>Q9JV90</accession>
<accession>A1IQZ0</accession>
<keyword id="KW-0067">ATP-binding</keyword>
<keyword id="KW-0342">GTP-binding</keyword>
<keyword id="KW-0547">Nucleotide-binding</keyword>
<organism>
    <name type="scientific">Neisseria meningitidis serogroup A / serotype 4A (strain DSM 15465 / Z2491)</name>
    <dbReference type="NCBI Taxonomy" id="122587"/>
    <lineage>
        <taxon>Bacteria</taxon>
        <taxon>Pseudomonadati</taxon>
        <taxon>Pseudomonadota</taxon>
        <taxon>Betaproteobacteria</taxon>
        <taxon>Neisseriales</taxon>
        <taxon>Neisseriaceae</taxon>
        <taxon>Neisseria</taxon>
    </lineage>
</organism>
<feature type="chain" id="PRO_0000107734" description="Nucleotide-binding protein NMA0948">
    <location>
        <begin position="1"/>
        <end position="284"/>
    </location>
</feature>
<feature type="binding site" evidence="1">
    <location>
        <begin position="8"/>
        <end position="15"/>
    </location>
    <ligand>
        <name>ATP</name>
        <dbReference type="ChEBI" id="CHEBI:30616"/>
    </ligand>
</feature>
<feature type="binding site" evidence="1">
    <location>
        <begin position="58"/>
        <end position="61"/>
    </location>
    <ligand>
        <name>GTP</name>
        <dbReference type="ChEBI" id="CHEBI:37565"/>
    </ligand>
</feature>
<name>Y948_NEIMA</name>
<proteinExistence type="inferred from homology"/>
<gene>
    <name type="ordered locus">NMA0948</name>
</gene>
<evidence type="ECO:0000255" key="1">
    <source>
        <dbReference type="HAMAP-Rule" id="MF_00636"/>
    </source>
</evidence>
<sequence length="284" mass="32758">MKIVLISGLSGSGKSVALRQMEDSGYFCVDNLPLEMLPALVSYHIERADETELAVSVDVRSGIDIGQAREQIASLRGLGHRVEVLFVEAEESVLVRRFSETRRGHPLSNQDMTLLESLKKEREWLFPLKEIAYCIDTSKMNAQQLRHAVRQWLKVERTGLLVILESFGFKYGVPNNADFMFDMRSLPNPYYDPELRPYTGMDKPVWDYLDGQPLVQEMVDDIERFVTHWLPRLEDESRSYVTVAIGCTGGQHRLVYIVEKLARRLKGRYELLIRHRQAQNLSDR</sequence>
<reference key="1">
    <citation type="journal article" date="2000" name="Nature">
        <title>Complete DNA sequence of a serogroup A strain of Neisseria meningitidis Z2491.</title>
        <authorList>
            <person name="Parkhill J."/>
            <person name="Achtman M."/>
            <person name="James K.D."/>
            <person name="Bentley S.D."/>
            <person name="Churcher C.M."/>
            <person name="Klee S.R."/>
            <person name="Morelli G."/>
            <person name="Basham D."/>
            <person name="Brown D."/>
            <person name="Chillingworth T."/>
            <person name="Davies R.M."/>
            <person name="Davis P."/>
            <person name="Devlin K."/>
            <person name="Feltwell T."/>
            <person name="Hamlin N."/>
            <person name="Holroyd S."/>
            <person name="Jagels K."/>
            <person name="Leather S."/>
            <person name="Moule S."/>
            <person name="Mungall K.L."/>
            <person name="Quail M.A."/>
            <person name="Rajandream M.A."/>
            <person name="Rutherford K.M."/>
            <person name="Simmonds M."/>
            <person name="Skelton J."/>
            <person name="Whitehead S."/>
            <person name="Spratt B.G."/>
            <person name="Barrell B.G."/>
        </authorList>
    </citation>
    <scope>NUCLEOTIDE SEQUENCE [LARGE SCALE GENOMIC DNA]</scope>
    <source>
        <strain>DSM 15465 / Z2491</strain>
    </source>
</reference>
<dbReference type="EMBL" id="AL157959">
    <property type="protein sequence ID" value="CAM08174.1"/>
    <property type="molecule type" value="Genomic_DNA"/>
</dbReference>
<dbReference type="PIR" id="D81941">
    <property type="entry name" value="D81941"/>
</dbReference>
<dbReference type="RefSeq" id="WP_002249831.1">
    <property type="nucleotide sequence ID" value="NC_003116.1"/>
</dbReference>
<dbReference type="SMR" id="Q9JV90"/>
<dbReference type="EnsemblBacteria" id="CAM08174">
    <property type="protein sequence ID" value="CAM08174"/>
    <property type="gene ID" value="NMA0948"/>
</dbReference>
<dbReference type="KEGG" id="nma:NMA0948"/>
<dbReference type="HOGENOM" id="CLU_059558_1_1_4"/>
<dbReference type="Proteomes" id="UP000000626">
    <property type="component" value="Chromosome"/>
</dbReference>
<dbReference type="GO" id="GO:0005524">
    <property type="term" value="F:ATP binding"/>
    <property type="evidence" value="ECO:0007669"/>
    <property type="project" value="UniProtKB-UniRule"/>
</dbReference>
<dbReference type="GO" id="GO:0005525">
    <property type="term" value="F:GTP binding"/>
    <property type="evidence" value="ECO:0007669"/>
    <property type="project" value="UniProtKB-UniRule"/>
</dbReference>
<dbReference type="Gene3D" id="3.40.50.300">
    <property type="entry name" value="P-loop containing nucleotide triphosphate hydrolases"/>
    <property type="match status" value="1"/>
</dbReference>
<dbReference type="HAMAP" id="MF_00636">
    <property type="entry name" value="RapZ_like"/>
    <property type="match status" value="1"/>
</dbReference>
<dbReference type="InterPro" id="IPR027417">
    <property type="entry name" value="P-loop_NTPase"/>
</dbReference>
<dbReference type="InterPro" id="IPR005337">
    <property type="entry name" value="RapZ-like"/>
</dbReference>
<dbReference type="InterPro" id="IPR053930">
    <property type="entry name" value="RapZ-like_N"/>
</dbReference>
<dbReference type="InterPro" id="IPR053931">
    <property type="entry name" value="RapZ_C"/>
</dbReference>
<dbReference type="NCBIfam" id="NF003828">
    <property type="entry name" value="PRK05416.1"/>
    <property type="match status" value="1"/>
</dbReference>
<dbReference type="PANTHER" id="PTHR30448">
    <property type="entry name" value="RNASE ADAPTER PROTEIN RAPZ"/>
    <property type="match status" value="1"/>
</dbReference>
<dbReference type="PANTHER" id="PTHR30448:SF0">
    <property type="entry name" value="RNASE ADAPTER PROTEIN RAPZ"/>
    <property type="match status" value="1"/>
</dbReference>
<dbReference type="Pfam" id="PF22740">
    <property type="entry name" value="PapZ_C"/>
    <property type="match status" value="1"/>
</dbReference>
<dbReference type="Pfam" id="PF03668">
    <property type="entry name" value="RapZ-like_N"/>
    <property type="match status" value="1"/>
</dbReference>
<dbReference type="PIRSF" id="PIRSF005052">
    <property type="entry name" value="P-loopkin"/>
    <property type="match status" value="1"/>
</dbReference>
<dbReference type="SUPFAM" id="SSF52540">
    <property type="entry name" value="P-loop containing nucleoside triphosphate hydrolases"/>
    <property type="match status" value="1"/>
</dbReference>
<comment type="function">
    <text evidence="1">Displays ATPase and GTPase activities.</text>
</comment>
<comment type="similarity">
    <text evidence="1">Belongs to the RapZ-like family.</text>
</comment>
<protein>
    <recommendedName>
        <fullName evidence="1">Nucleotide-binding protein NMA0948</fullName>
    </recommendedName>
</protein>